<comment type="subcellular location">
    <subcellularLocation>
        <location evidence="2">Endoplasmic reticulum membrane</location>
        <topology evidence="2">Multi-pass membrane protein</topology>
    </subcellularLocation>
</comment>
<organism>
    <name type="scientific">Saccharomyces cerevisiae (strain ATCC 204508 / S288c)</name>
    <name type="common">Baker's yeast</name>
    <dbReference type="NCBI Taxonomy" id="559292"/>
    <lineage>
        <taxon>Eukaryota</taxon>
        <taxon>Fungi</taxon>
        <taxon>Dikarya</taxon>
        <taxon>Ascomycota</taxon>
        <taxon>Saccharomycotina</taxon>
        <taxon>Saccharomycetes</taxon>
        <taxon>Saccharomycetales</taxon>
        <taxon>Saccharomycetaceae</taxon>
        <taxon>Saccharomyces</taxon>
    </lineage>
</organism>
<feature type="chain" id="PRO_0000252276" description="Uncharacterized membrane protein YPR071W">
    <location>
        <begin position="1"/>
        <end position="211"/>
    </location>
</feature>
<feature type="topological domain" description="Cytoplasmic" evidence="1">
    <location>
        <begin position="1"/>
        <end position="33"/>
    </location>
</feature>
<feature type="transmembrane region" description="Helical" evidence="1">
    <location>
        <begin position="34"/>
        <end position="54"/>
    </location>
</feature>
<feature type="topological domain" description="Lumenal" evidence="1">
    <location>
        <begin position="55"/>
        <end position="58"/>
    </location>
</feature>
<feature type="transmembrane region" description="Helical" evidence="1">
    <location>
        <begin position="59"/>
        <end position="79"/>
    </location>
</feature>
<feature type="topological domain" description="Cytoplasmic" evidence="1">
    <location>
        <begin position="80"/>
        <end position="116"/>
    </location>
</feature>
<feature type="transmembrane region" description="Helical" evidence="1">
    <location>
        <begin position="117"/>
        <end position="137"/>
    </location>
</feature>
<feature type="topological domain" description="Lumenal" evidence="1">
    <location>
        <begin position="138"/>
        <end position="162"/>
    </location>
</feature>
<feature type="transmembrane region" description="Helical" evidence="1">
    <location>
        <begin position="163"/>
        <end position="183"/>
    </location>
</feature>
<feature type="topological domain" description="Cytoplasmic" evidence="1">
    <location>
        <begin position="184"/>
        <end position="211"/>
    </location>
</feature>
<reference key="1">
    <citation type="journal article" date="1997" name="Nature">
        <title>The nucleotide sequence of Saccharomyces cerevisiae chromosome XVI.</title>
        <authorList>
            <person name="Bussey H."/>
            <person name="Storms R.K."/>
            <person name="Ahmed A."/>
            <person name="Albermann K."/>
            <person name="Allen E."/>
            <person name="Ansorge W."/>
            <person name="Araujo R."/>
            <person name="Aparicio A."/>
            <person name="Barrell B.G."/>
            <person name="Badcock K."/>
            <person name="Benes V."/>
            <person name="Botstein D."/>
            <person name="Bowman S."/>
            <person name="Brueckner M."/>
            <person name="Carpenter J."/>
            <person name="Cherry J.M."/>
            <person name="Chung E."/>
            <person name="Churcher C.M."/>
            <person name="Coster F."/>
            <person name="Davis K."/>
            <person name="Davis R.W."/>
            <person name="Dietrich F.S."/>
            <person name="Delius H."/>
            <person name="DiPaolo T."/>
            <person name="Dubois E."/>
            <person name="Duesterhoeft A."/>
            <person name="Duncan M."/>
            <person name="Floeth M."/>
            <person name="Fortin N."/>
            <person name="Friesen J.D."/>
            <person name="Fritz C."/>
            <person name="Goffeau A."/>
            <person name="Hall J."/>
            <person name="Hebling U."/>
            <person name="Heumann K."/>
            <person name="Hilbert H."/>
            <person name="Hillier L.W."/>
            <person name="Hunicke-Smith S."/>
            <person name="Hyman R.W."/>
            <person name="Johnston M."/>
            <person name="Kalman S."/>
            <person name="Kleine K."/>
            <person name="Komp C."/>
            <person name="Kurdi O."/>
            <person name="Lashkari D."/>
            <person name="Lew H."/>
            <person name="Lin A."/>
            <person name="Lin D."/>
            <person name="Louis E.J."/>
            <person name="Marathe R."/>
            <person name="Messenguy F."/>
            <person name="Mewes H.-W."/>
            <person name="Mirtipati S."/>
            <person name="Moestl D."/>
            <person name="Mueller-Auer S."/>
            <person name="Namath A."/>
            <person name="Nentwich U."/>
            <person name="Oefner P."/>
            <person name="Pearson D."/>
            <person name="Petel F.X."/>
            <person name="Pohl T.M."/>
            <person name="Purnelle B."/>
            <person name="Rajandream M.A."/>
            <person name="Rechmann S."/>
            <person name="Rieger M."/>
            <person name="Riles L."/>
            <person name="Roberts D."/>
            <person name="Schaefer M."/>
            <person name="Scharfe M."/>
            <person name="Scherens B."/>
            <person name="Schramm S."/>
            <person name="Schroeder M."/>
            <person name="Sdicu A.-M."/>
            <person name="Tettelin H."/>
            <person name="Urrestarazu L.A."/>
            <person name="Ushinsky S."/>
            <person name="Vierendeels F."/>
            <person name="Vissers S."/>
            <person name="Voss H."/>
            <person name="Walsh S.V."/>
            <person name="Wambutt R."/>
            <person name="Wang Y."/>
            <person name="Wedler E."/>
            <person name="Wedler H."/>
            <person name="Winnett E."/>
            <person name="Zhong W.-W."/>
            <person name="Zollner A."/>
            <person name="Vo D.H."/>
            <person name="Hani J."/>
        </authorList>
    </citation>
    <scope>NUCLEOTIDE SEQUENCE [LARGE SCALE GENOMIC DNA]</scope>
    <source>
        <strain>ATCC 204508 / S288c</strain>
    </source>
</reference>
<reference key="2">
    <citation type="journal article" date="2014" name="G3 (Bethesda)">
        <title>The reference genome sequence of Saccharomyces cerevisiae: Then and now.</title>
        <authorList>
            <person name="Engel S.R."/>
            <person name="Dietrich F.S."/>
            <person name="Fisk D.G."/>
            <person name="Binkley G."/>
            <person name="Balakrishnan R."/>
            <person name="Costanzo M.C."/>
            <person name="Dwight S.S."/>
            <person name="Hitz B.C."/>
            <person name="Karra K."/>
            <person name="Nash R.S."/>
            <person name="Weng S."/>
            <person name="Wong E.D."/>
            <person name="Lloyd P."/>
            <person name="Skrzypek M.S."/>
            <person name="Miyasato S.R."/>
            <person name="Simison M."/>
            <person name="Cherry J.M."/>
        </authorList>
    </citation>
    <scope>GENOME REANNOTATION</scope>
    <source>
        <strain>ATCC 204508 / S288c</strain>
    </source>
</reference>
<reference key="3">
    <citation type="journal article" date="2003" name="Nature">
        <title>Global analysis of protein localization in budding yeast.</title>
        <authorList>
            <person name="Huh W.-K."/>
            <person name="Falvo J.V."/>
            <person name="Gerke L.C."/>
            <person name="Carroll A.S."/>
            <person name="Howson R.W."/>
            <person name="Weissman J.S."/>
            <person name="O'Shea E.K."/>
        </authorList>
    </citation>
    <scope>SUBCELLULAR LOCATION [LARGE SCALE ANALYSIS]</scope>
</reference>
<reference key="4">
    <citation type="journal article" date="2006" name="Proc. Natl. Acad. Sci. U.S.A.">
        <title>A global topology map of the Saccharomyces cerevisiae membrane proteome.</title>
        <authorList>
            <person name="Kim H."/>
            <person name="Melen K."/>
            <person name="Oesterberg M."/>
            <person name="von Heijne G."/>
        </authorList>
    </citation>
    <scope>TOPOLOGY [LARGE SCALE ANALYSIS]</scope>
    <source>
        <strain>ATCC 208353 / W303-1A</strain>
    </source>
</reference>
<sequence length="211" mass="24606">MQNGTEDKSNIPARSNDDVLPPLAVRLTMKVMRLIFIGKMFAYSFVPFPPFKLLTFDNTVGWFVAYSAIVSIWGFAVWMERGYRHKINLLPPRCTKIRCSRCNTRIRSPNWFKYKNWLYFFLLYVSLTTSNLIIQLASFMTEMSRRGISVPGTKDPGKRDYLGLIIPMRFIGAFIHYMTANLFKEYYLHNGPLEKNDRPSTDEKTSENETL</sequence>
<proteinExistence type="evidence at protein level"/>
<name>YPR71_YEAST</name>
<evidence type="ECO:0000255" key="1"/>
<evidence type="ECO:0000269" key="2">
    <source>
    </source>
</evidence>
<dbReference type="EMBL" id="Z71255">
    <property type="protein sequence ID" value="CAA94979.1"/>
    <property type="molecule type" value="Genomic_DNA"/>
</dbReference>
<dbReference type="EMBL" id="Z49219">
    <property type="protein sequence ID" value="CAA89188.1"/>
    <property type="molecule type" value="Genomic_DNA"/>
</dbReference>
<dbReference type="EMBL" id="U51033">
    <property type="protein sequence ID" value="AAB68122.1"/>
    <property type="molecule type" value="Genomic_DNA"/>
</dbReference>
<dbReference type="EMBL" id="BK006949">
    <property type="protein sequence ID" value="DAA11491.1"/>
    <property type="molecule type" value="Genomic_DNA"/>
</dbReference>
<dbReference type="PIR" id="S54092">
    <property type="entry name" value="S54092"/>
</dbReference>
<dbReference type="RefSeq" id="NP_015396.1">
    <property type="nucleotide sequence ID" value="NM_001184168.1"/>
</dbReference>
<dbReference type="BioGRID" id="36243">
    <property type="interactions" value="50"/>
</dbReference>
<dbReference type="DIP" id="DIP-3892N"/>
<dbReference type="FunCoup" id="Q12346">
    <property type="interactions" value="28"/>
</dbReference>
<dbReference type="IntAct" id="Q12346">
    <property type="interactions" value="5"/>
</dbReference>
<dbReference type="MINT" id="Q12346"/>
<dbReference type="STRING" id="4932.YPR071W"/>
<dbReference type="PaxDb" id="4932-YPR071W"/>
<dbReference type="PeptideAtlas" id="Q12346"/>
<dbReference type="PRIDE" id="Q12346"/>
<dbReference type="EnsemblFungi" id="YPR071W_mRNA">
    <property type="protein sequence ID" value="YPR071W"/>
    <property type="gene ID" value="YPR071W"/>
</dbReference>
<dbReference type="GeneID" id="856184"/>
<dbReference type="KEGG" id="sce:YPR071W"/>
<dbReference type="AGR" id="SGD:S000006275"/>
<dbReference type="SGD" id="S000006275">
    <property type="gene designation" value="YPR071W"/>
</dbReference>
<dbReference type="VEuPathDB" id="FungiDB:YPR071W"/>
<dbReference type="GeneTree" id="ENSGT00940000181333"/>
<dbReference type="HOGENOM" id="CLU_1338184_0_0_1"/>
<dbReference type="InParanoid" id="Q12346"/>
<dbReference type="OMA" id="TEMSRRX"/>
<dbReference type="OrthoDB" id="4037559at2759"/>
<dbReference type="BioCyc" id="YEAST:G3O-34218-MONOMER"/>
<dbReference type="PRO" id="PR:Q12346"/>
<dbReference type="Proteomes" id="UP000002311">
    <property type="component" value="Chromosome XVI"/>
</dbReference>
<dbReference type="RNAct" id="Q12346">
    <property type="molecule type" value="protein"/>
</dbReference>
<dbReference type="GO" id="GO:0071944">
    <property type="term" value="C:cell periphery"/>
    <property type="evidence" value="ECO:0007005"/>
    <property type="project" value="SGD"/>
</dbReference>
<dbReference type="GO" id="GO:0005783">
    <property type="term" value="C:endoplasmic reticulum"/>
    <property type="evidence" value="ECO:0007005"/>
    <property type="project" value="SGD"/>
</dbReference>
<dbReference type="GO" id="GO:0005789">
    <property type="term" value="C:endoplasmic reticulum membrane"/>
    <property type="evidence" value="ECO:0007669"/>
    <property type="project" value="UniProtKB-SubCell"/>
</dbReference>
<dbReference type="InterPro" id="IPR031427">
    <property type="entry name" value="DUF4668"/>
</dbReference>
<dbReference type="Pfam" id="PF15701">
    <property type="entry name" value="DUF4668"/>
    <property type="match status" value="1"/>
</dbReference>
<gene>
    <name type="ordered locus">YPR071W</name>
    <name type="ORF">YP9499.26</name>
</gene>
<keyword id="KW-0256">Endoplasmic reticulum</keyword>
<keyword id="KW-0472">Membrane</keyword>
<keyword id="KW-1185">Reference proteome</keyword>
<keyword id="KW-0812">Transmembrane</keyword>
<keyword id="KW-1133">Transmembrane helix</keyword>
<accession>Q12346</accession>
<accession>D6W475</accession>
<protein>
    <recommendedName>
        <fullName>Uncharacterized membrane protein YPR071W</fullName>
    </recommendedName>
</protein>